<evidence type="ECO:0000250" key="1">
    <source>
        <dbReference type="UniProtKB" id="O93868"/>
    </source>
</evidence>
<evidence type="ECO:0000250" key="2">
    <source>
        <dbReference type="UniProtKB" id="P0CR36"/>
    </source>
</evidence>
<evidence type="ECO:0000250" key="3">
    <source>
        <dbReference type="UniProtKB" id="P40471"/>
    </source>
</evidence>
<evidence type="ECO:0000250" key="4">
    <source>
        <dbReference type="UniProtKB" id="Q06136"/>
    </source>
</evidence>
<evidence type="ECO:0000255" key="5"/>
<evidence type="ECO:0000305" key="6"/>
<protein>
    <recommendedName>
        <fullName>3-ketodihydrosphingosine reductase</fullName>
        <shortName>KDS reductase</shortName>
        <ecNumber evidence="4">1.1.1.102</ecNumber>
    </recommendedName>
    <alternativeName>
        <fullName>3-dehydrosphinganine reductase</fullName>
    </alternativeName>
</protein>
<keyword id="KW-0256">Endoplasmic reticulum</keyword>
<keyword id="KW-0443">Lipid metabolism</keyword>
<keyword id="KW-0521">NADP</keyword>
<keyword id="KW-0547">Nucleotide-binding</keyword>
<keyword id="KW-0560">Oxidoreductase</keyword>
<keyword id="KW-1185">Reference proteome</keyword>
<keyword id="KW-0732">Signal</keyword>
<keyword id="KW-0746">Sphingolipid metabolism</keyword>
<sequence length="334" mass="36470">MIIYILFSLLAAVIVHLVYKKQTGFKLKGKHIVVVGGSSGIGKELVYELLKENIASISVISRSLDKLRSVVDDCPSEVCTKSTPLNVGSLKSKIEIYSCDITNKIKVKETIAQIVSKNQGGKIDCLINCAGFAIPGYFIEQDEEIFEKTMQLDYFGSLYATKEVVPLMIENGGQGGHIVFVSSTCGLVGVPGYSTYCPSKFALRGLAETLRSELKPYKITFSVVYPPDTDTPGYQQENLTKPEETVAISGGGKAVSPLEVAKSIVSGIKNGDYHIAYDVPTKLCAVLSPGLTPFYFSFFDILLAPICRLVGIIAMNQNDAEVLKSWKKRNQLKK</sequence>
<gene>
    <name type="primary">ksrA-1</name>
    <name type="ORF">DDB_G0272883</name>
</gene>
<gene>
    <name type="primary">ksrA-2</name>
    <name type="ORF">DDB_G0274015</name>
</gene>
<feature type="signal peptide" evidence="5">
    <location>
        <begin position="1"/>
        <end position="20"/>
    </location>
</feature>
<feature type="chain" id="PRO_0000331449" description="3-ketodihydrosphingosine reductase">
    <location>
        <begin position="21"/>
        <end position="334"/>
    </location>
</feature>
<feature type="short sequence motif" description="GXSXG" evidence="3">
    <location>
        <begin position="36"/>
        <end position="40"/>
    </location>
</feature>
<feature type="active site" description="Proton donor" evidence="1">
    <location>
        <position position="182"/>
    </location>
</feature>
<feature type="active site" description="Proton acceptor" evidence="1">
    <location>
        <position position="196"/>
    </location>
</feature>
<feature type="active site" description="Lowers pKa of active site Tyr" evidence="1">
    <location>
        <position position="200"/>
    </location>
</feature>
<feature type="binding site" evidence="2">
    <location>
        <position position="36"/>
    </location>
    <ligand>
        <name>NADPH</name>
        <dbReference type="ChEBI" id="CHEBI:57783"/>
    </ligand>
</feature>
<feature type="binding site" evidence="2">
    <location>
        <position position="38"/>
    </location>
    <ligand>
        <name>NADPH</name>
        <dbReference type="ChEBI" id="CHEBI:57783"/>
    </ligand>
</feature>
<feature type="binding site" evidence="2">
    <location>
        <position position="39"/>
    </location>
    <ligand>
        <name>NADPH</name>
        <dbReference type="ChEBI" id="CHEBI:57783"/>
    </ligand>
</feature>
<feature type="binding site" evidence="2">
    <location>
        <position position="40"/>
    </location>
    <ligand>
        <name>NADPH</name>
        <dbReference type="ChEBI" id="CHEBI:57783"/>
    </ligand>
</feature>
<feature type="binding site" evidence="2">
    <location>
        <position position="62"/>
    </location>
    <ligand>
        <name>NADPH</name>
        <dbReference type="ChEBI" id="CHEBI:57783"/>
    </ligand>
</feature>
<feature type="binding site" evidence="2">
    <location>
        <position position="66"/>
    </location>
    <ligand>
        <name>NADPH</name>
        <dbReference type="ChEBI" id="CHEBI:57783"/>
    </ligand>
</feature>
<feature type="binding site" evidence="2">
    <location>
        <position position="100"/>
    </location>
    <ligand>
        <name>NADPH</name>
        <dbReference type="ChEBI" id="CHEBI:57783"/>
    </ligand>
</feature>
<feature type="binding site" evidence="2">
    <location>
        <position position="101"/>
    </location>
    <ligand>
        <name>NADPH</name>
        <dbReference type="ChEBI" id="CHEBI:57783"/>
    </ligand>
</feature>
<feature type="binding site" evidence="1">
    <location>
        <position position="196"/>
    </location>
    <ligand>
        <name>NADP(+)</name>
        <dbReference type="ChEBI" id="CHEBI:58349"/>
    </ligand>
</feature>
<feature type="binding site" evidence="1">
    <location>
        <position position="200"/>
    </location>
    <ligand>
        <name>NADP(+)</name>
        <dbReference type="ChEBI" id="CHEBI:58349"/>
    </ligand>
</feature>
<accession>Q556J2</accession>
<accession>Q86AN0</accession>
<dbReference type="EC" id="1.1.1.102" evidence="4"/>
<dbReference type="EMBL" id="AAFI02000011">
    <property type="protein sequence ID" value="EAL70441.1"/>
    <property type="molecule type" value="Genomic_DNA"/>
</dbReference>
<dbReference type="EMBL" id="AAFI02000009">
    <property type="protein sequence ID" value="EAL71079.1"/>
    <property type="molecule type" value="Genomic_DNA"/>
</dbReference>
<dbReference type="RefSeq" id="XP_644366.1">
    <property type="nucleotide sequence ID" value="XM_639274.1"/>
</dbReference>
<dbReference type="RefSeq" id="XP_645048.1">
    <property type="nucleotide sequence ID" value="XM_639956.1"/>
</dbReference>
<dbReference type="SMR" id="Q556J2"/>
<dbReference type="FunCoup" id="Q556J2">
    <property type="interactions" value="336"/>
</dbReference>
<dbReference type="STRING" id="44689.Q556J2"/>
<dbReference type="PaxDb" id="44689-DDB0232044"/>
<dbReference type="EnsemblProtists" id="EAL70441">
    <property type="protein sequence ID" value="EAL70441"/>
    <property type="gene ID" value="DDB_G0274015"/>
</dbReference>
<dbReference type="EnsemblProtists" id="EAL71079">
    <property type="protein sequence ID" value="EAL71079"/>
    <property type="gene ID" value="DDB_G0272883"/>
</dbReference>
<dbReference type="GeneID" id="8618724"/>
<dbReference type="GeneID" id="8619252"/>
<dbReference type="KEGG" id="ddi:DDB_G0272883"/>
<dbReference type="KEGG" id="ddi:DDB_G0274015"/>
<dbReference type="dictyBase" id="DDB_G0272883">
    <property type="gene designation" value="ksrA-1"/>
</dbReference>
<dbReference type="dictyBase" id="DDB_G0274015">
    <property type="gene designation" value="ksrA-2"/>
</dbReference>
<dbReference type="VEuPathDB" id="AmoebaDB:DDB_G0274015"/>
<dbReference type="eggNOG" id="KOG1210">
    <property type="taxonomic scope" value="Eukaryota"/>
</dbReference>
<dbReference type="HOGENOM" id="CLU_010194_3_2_1"/>
<dbReference type="InParanoid" id="Q556J2"/>
<dbReference type="OMA" id="PRQWGFF"/>
<dbReference type="PhylomeDB" id="Q556J2"/>
<dbReference type="UniPathway" id="UPA00222"/>
<dbReference type="PRO" id="PR:Q556J2"/>
<dbReference type="Proteomes" id="UP000002195">
    <property type="component" value="Chromosome 2"/>
</dbReference>
<dbReference type="GO" id="GO:0005789">
    <property type="term" value="C:endoplasmic reticulum membrane"/>
    <property type="evidence" value="ECO:0000318"/>
    <property type="project" value="GO_Central"/>
</dbReference>
<dbReference type="GO" id="GO:0005811">
    <property type="term" value="C:lipid droplet"/>
    <property type="evidence" value="ECO:0007005"/>
    <property type="project" value="dictyBase"/>
</dbReference>
<dbReference type="GO" id="GO:0047560">
    <property type="term" value="F:3-dehydrosphinganine reductase activity"/>
    <property type="evidence" value="ECO:0000250"/>
    <property type="project" value="UniProtKB"/>
</dbReference>
<dbReference type="GO" id="GO:0070402">
    <property type="term" value="F:NADPH binding"/>
    <property type="evidence" value="ECO:0000250"/>
    <property type="project" value="UniProtKB"/>
</dbReference>
<dbReference type="GO" id="GO:0006666">
    <property type="term" value="P:3-keto-sphinganine metabolic process"/>
    <property type="evidence" value="ECO:0000250"/>
    <property type="project" value="UniProtKB"/>
</dbReference>
<dbReference type="GO" id="GO:0030148">
    <property type="term" value="P:sphingolipid biosynthetic process"/>
    <property type="evidence" value="ECO:0000250"/>
    <property type="project" value="UniProtKB"/>
</dbReference>
<dbReference type="CDD" id="cd08939">
    <property type="entry name" value="KDSR-like_SDR_c"/>
    <property type="match status" value="1"/>
</dbReference>
<dbReference type="FunFam" id="3.40.50.720:FF:001524">
    <property type="entry name" value="3-ketodihydrosphingosine reductase"/>
    <property type="match status" value="1"/>
</dbReference>
<dbReference type="Gene3D" id="3.40.50.720">
    <property type="entry name" value="NAD(P)-binding Rossmann-like Domain"/>
    <property type="match status" value="1"/>
</dbReference>
<dbReference type="InterPro" id="IPR045022">
    <property type="entry name" value="KDSR-like"/>
</dbReference>
<dbReference type="InterPro" id="IPR036291">
    <property type="entry name" value="NAD(P)-bd_dom_sf"/>
</dbReference>
<dbReference type="InterPro" id="IPR002347">
    <property type="entry name" value="SDR_fam"/>
</dbReference>
<dbReference type="PANTHER" id="PTHR43550">
    <property type="entry name" value="3-KETODIHYDROSPHINGOSINE REDUCTASE"/>
    <property type="match status" value="1"/>
</dbReference>
<dbReference type="PANTHER" id="PTHR43550:SF3">
    <property type="entry name" value="3-KETODIHYDROSPHINGOSINE REDUCTASE"/>
    <property type="match status" value="1"/>
</dbReference>
<dbReference type="Pfam" id="PF00106">
    <property type="entry name" value="adh_short"/>
    <property type="match status" value="1"/>
</dbReference>
<dbReference type="PRINTS" id="PR00081">
    <property type="entry name" value="GDHRDH"/>
</dbReference>
<dbReference type="PRINTS" id="PR00080">
    <property type="entry name" value="SDRFAMILY"/>
</dbReference>
<dbReference type="SUPFAM" id="SSF51735">
    <property type="entry name" value="NAD(P)-binding Rossmann-fold domains"/>
    <property type="match status" value="1"/>
</dbReference>
<name>KDSR_DICDI</name>
<reference key="1">
    <citation type="journal article" date="2002" name="Nature">
        <title>Sequence and analysis of chromosome 2 of Dictyostelium discoideum.</title>
        <authorList>
            <person name="Gloeckner G."/>
            <person name="Eichinger L."/>
            <person name="Szafranski K."/>
            <person name="Pachebat J.A."/>
            <person name="Bankier A.T."/>
            <person name="Dear P.H."/>
            <person name="Lehmann R."/>
            <person name="Baumgart C."/>
            <person name="Parra G."/>
            <person name="Abril J.F."/>
            <person name="Guigo R."/>
            <person name="Kumpf K."/>
            <person name="Tunggal B."/>
            <person name="Cox E.C."/>
            <person name="Quail M.A."/>
            <person name="Platzer M."/>
            <person name="Rosenthal A."/>
            <person name="Noegel A.A."/>
        </authorList>
    </citation>
    <scope>NUCLEOTIDE SEQUENCE [LARGE SCALE GENOMIC DNA]</scope>
    <source>
        <strain>AX4</strain>
    </source>
</reference>
<reference key="2">
    <citation type="journal article" date="2005" name="Nature">
        <title>The genome of the social amoeba Dictyostelium discoideum.</title>
        <authorList>
            <person name="Eichinger L."/>
            <person name="Pachebat J.A."/>
            <person name="Gloeckner G."/>
            <person name="Rajandream M.A."/>
            <person name="Sucgang R."/>
            <person name="Berriman M."/>
            <person name="Song J."/>
            <person name="Olsen R."/>
            <person name="Szafranski K."/>
            <person name="Xu Q."/>
            <person name="Tunggal B."/>
            <person name="Kummerfeld S."/>
            <person name="Madera M."/>
            <person name="Konfortov B.A."/>
            <person name="Rivero F."/>
            <person name="Bankier A.T."/>
            <person name="Lehmann R."/>
            <person name="Hamlin N."/>
            <person name="Davies R."/>
            <person name="Gaudet P."/>
            <person name="Fey P."/>
            <person name="Pilcher K."/>
            <person name="Chen G."/>
            <person name="Saunders D."/>
            <person name="Sodergren E.J."/>
            <person name="Davis P."/>
            <person name="Kerhornou A."/>
            <person name="Nie X."/>
            <person name="Hall N."/>
            <person name="Anjard C."/>
            <person name="Hemphill L."/>
            <person name="Bason N."/>
            <person name="Farbrother P."/>
            <person name="Desany B."/>
            <person name="Just E."/>
            <person name="Morio T."/>
            <person name="Rost R."/>
            <person name="Churcher C.M."/>
            <person name="Cooper J."/>
            <person name="Haydock S."/>
            <person name="van Driessche N."/>
            <person name="Cronin A."/>
            <person name="Goodhead I."/>
            <person name="Muzny D.M."/>
            <person name="Mourier T."/>
            <person name="Pain A."/>
            <person name="Lu M."/>
            <person name="Harper D."/>
            <person name="Lindsay R."/>
            <person name="Hauser H."/>
            <person name="James K.D."/>
            <person name="Quiles M."/>
            <person name="Madan Babu M."/>
            <person name="Saito T."/>
            <person name="Buchrieser C."/>
            <person name="Wardroper A."/>
            <person name="Felder M."/>
            <person name="Thangavelu M."/>
            <person name="Johnson D."/>
            <person name="Knights A."/>
            <person name="Loulseged H."/>
            <person name="Mungall K.L."/>
            <person name="Oliver K."/>
            <person name="Price C."/>
            <person name="Quail M.A."/>
            <person name="Urushihara H."/>
            <person name="Hernandez J."/>
            <person name="Rabbinowitsch E."/>
            <person name="Steffen D."/>
            <person name="Sanders M."/>
            <person name="Ma J."/>
            <person name="Kohara Y."/>
            <person name="Sharp S."/>
            <person name="Simmonds M.N."/>
            <person name="Spiegler S."/>
            <person name="Tivey A."/>
            <person name="Sugano S."/>
            <person name="White B."/>
            <person name="Walker D."/>
            <person name="Woodward J.R."/>
            <person name="Winckler T."/>
            <person name="Tanaka Y."/>
            <person name="Shaulsky G."/>
            <person name="Schleicher M."/>
            <person name="Weinstock G.M."/>
            <person name="Rosenthal A."/>
            <person name="Cox E.C."/>
            <person name="Chisholm R.L."/>
            <person name="Gibbs R.A."/>
            <person name="Loomis W.F."/>
            <person name="Platzer M."/>
            <person name="Kay R.R."/>
            <person name="Williams J.G."/>
            <person name="Dear P.H."/>
            <person name="Noegel A.A."/>
            <person name="Barrell B.G."/>
            <person name="Kuspa A."/>
        </authorList>
    </citation>
    <scope>NUCLEOTIDE SEQUENCE [LARGE SCALE GENOMIC DNA]</scope>
    <source>
        <strain>AX4</strain>
    </source>
</reference>
<proteinExistence type="inferred from homology"/>
<comment type="function">
    <text evidence="4">Catalyzes the reduction of 3'-oxosphinganine (3-ketodihydrosphingosine/KDS) to sphinganine (dihydrosphingosine/DHS), the second step of de novo sphingolipid biosynthesis.</text>
</comment>
<comment type="catalytic activity">
    <reaction evidence="4">
        <text>sphinganine + NADP(+) = 3-oxosphinganine + NADPH + H(+)</text>
        <dbReference type="Rhea" id="RHEA:22640"/>
        <dbReference type="ChEBI" id="CHEBI:15378"/>
        <dbReference type="ChEBI" id="CHEBI:57783"/>
        <dbReference type="ChEBI" id="CHEBI:57817"/>
        <dbReference type="ChEBI" id="CHEBI:58299"/>
        <dbReference type="ChEBI" id="CHEBI:58349"/>
        <dbReference type="EC" id="1.1.1.102"/>
    </reaction>
    <physiologicalReaction direction="right-to-left" evidence="4">
        <dbReference type="Rhea" id="RHEA:22642"/>
    </physiologicalReaction>
</comment>
<comment type="pathway">
    <text>Lipid metabolism; sphingolipid metabolism.</text>
</comment>
<comment type="subcellular location">
    <subcellularLocation>
        <location evidence="6">Endoplasmic reticulum</location>
    </subcellularLocation>
</comment>
<comment type="similarity">
    <text evidence="6">Belongs to the short-chain dehydrogenases/reductases (SDR) family.</text>
</comment>
<comment type="caution">
    <text evidence="6">The gene for this protein is duplicated in strains AX3 and AX4. These strains contain a duplication of a segment of 750 kb of chromosome 2 compared to the corresponding sequence in strain AX2.</text>
</comment>
<organism>
    <name type="scientific">Dictyostelium discoideum</name>
    <name type="common">Social amoeba</name>
    <dbReference type="NCBI Taxonomy" id="44689"/>
    <lineage>
        <taxon>Eukaryota</taxon>
        <taxon>Amoebozoa</taxon>
        <taxon>Evosea</taxon>
        <taxon>Eumycetozoa</taxon>
        <taxon>Dictyostelia</taxon>
        <taxon>Dictyosteliales</taxon>
        <taxon>Dictyosteliaceae</taxon>
        <taxon>Dictyostelium</taxon>
    </lineage>
</organism>